<dbReference type="EMBL" id="AP008207">
    <property type="protein sequence ID" value="BAH90995.1"/>
    <property type="status" value="ALT_SEQ"/>
    <property type="molecule type" value="Genomic_DNA"/>
</dbReference>
<dbReference type="EMBL" id="AP014957">
    <property type="protein sequence ID" value="BAS71416.1"/>
    <property type="status" value="ALT_SEQ"/>
    <property type="molecule type" value="Genomic_DNA"/>
</dbReference>
<dbReference type="EMBL" id="CM000138">
    <property type="protein sequence ID" value="EAZ11311.1"/>
    <property type="status" value="ALT_SEQ"/>
    <property type="molecule type" value="Genomic_DNA"/>
</dbReference>
<dbReference type="RefSeq" id="XP_015622097.1">
    <property type="nucleotide sequence ID" value="XM_015766611.1"/>
</dbReference>
<dbReference type="RefSeq" id="XP_015622098.1">
    <property type="nucleotide sequence ID" value="XM_015766612.1"/>
</dbReference>
<dbReference type="RefSeq" id="XP_015622099.1">
    <property type="nucleotide sequence ID" value="XM_015766613.1"/>
</dbReference>
<dbReference type="SMR" id="A2ZRG4"/>
<dbReference type="FunCoup" id="A2ZRG4">
    <property type="interactions" value="93"/>
</dbReference>
<dbReference type="STRING" id="39947.A2ZRG4"/>
<dbReference type="PaxDb" id="39947-A2ZRG4"/>
<dbReference type="KEGG" id="dosa:Os01g0260100"/>
<dbReference type="eggNOG" id="KOG0239">
    <property type="taxonomic scope" value="Eukaryota"/>
</dbReference>
<dbReference type="InParanoid" id="A2ZRG4"/>
<dbReference type="OrthoDB" id="3176171at2759"/>
<dbReference type="Proteomes" id="UP000000763">
    <property type="component" value="Chromosome 1"/>
</dbReference>
<dbReference type="Proteomes" id="UP000007752">
    <property type="component" value="Chromosome 1"/>
</dbReference>
<dbReference type="Proteomes" id="UP000059680">
    <property type="component" value="Chromosome 1"/>
</dbReference>
<dbReference type="GO" id="GO:0005737">
    <property type="term" value="C:cytoplasm"/>
    <property type="evidence" value="ECO:0000318"/>
    <property type="project" value="GO_Central"/>
</dbReference>
<dbReference type="GO" id="GO:0005871">
    <property type="term" value="C:kinesin complex"/>
    <property type="evidence" value="ECO:0000318"/>
    <property type="project" value="GO_Central"/>
</dbReference>
<dbReference type="GO" id="GO:0005874">
    <property type="term" value="C:microtubule"/>
    <property type="evidence" value="ECO:0000318"/>
    <property type="project" value="GO_Central"/>
</dbReference>
<dbReference type="GO" id="GO:0005524">
    <property type="term" value="F:ATP binding"/>
    <property type="evidence" value="ECO:0007669"/>
    <property type="project" value="UniProtKB-KW"/>
</dbReference>
<dbReference type="GO" id="GO:0016887">
    <property type="term" value="F:ATP hydrolysis activity"/>
    <property type="evidence" value="ECO:0000318"/>
    <property type="project" value="GO_Central"/>
</dbReference>
<dbReference type="GO" id="GO:0008017">
    <property type="term" value="F:microtubule binding"/>
    <property type="evidence" value="ECO:0000318"/>
    <property type="project" value="GO_Central"/>
</dbReference>
<dbReference type="GO" id="GO:0003777">
    <property type="term" value="F:microtubule motor activity"/>
    <property type="evidence" value="ECO:0000318"/>
    <property type="project" value="GO_Central"/>
</dbReference>
<dbReference type="GO" id="GO:0007018">
    <property type="term" value="P:microtubule-based movement"/>
    <property type="evidence" value="ECO:0000318"/>
    <property type="project" value="GO_Central"/>
</dbReference>
<dbReference type="GO" id="GO:0051225">
    <property type="term" value="P:spindle assembly"/>
    <property type="evidence" value="ECO:0000318"/>
    <property type="project" value="GO_Central"/>
</dbReference>
<dbReference type="FunFam" id="3.40.850.10:FF:000074">
    <property type="entry name" value="p-loop containing nucleoside triphosphate hydrolase superfamily protein"/>
    <property type="match status" value="1"/>
</dbReference>
<dbReference type="Gene3D" id="3.40.850.10">
    <property type="entry name" value="Kinesin motor domain"/>
    <property type="match status" value="1"/>
</dbReference>
<dbReference type="InterPro" id="IPR027640">
    <property type="entry name" value="Kinesin-like_fam"/>
</dbReference>
<dbReference type="InterPro" id="IPR001752">
    <property type="entry name" value="Kinesin_motor_dom"/>
</dbReference>
<dbReference type="InterPro" id="IPR036961">
    <property type="entry name" value="Kinesin_motor_dom_sf"/>
</dbReference>
<dbReference type="InterPro" id="IPR027417">
    <property type="entry name" value="P-loop_NTPase"/>
</dbReference>
<dbReference type="PANTHER" id="PTHR47972:SF23">
    <property type="entry name" value="KINESIN MOTOR DOMAIN-CONTAINING PROTEIN"/>
    <property type="match status" value="1"/>
</dbReference>
<dbReference type="PANTHER" id="PTHR47972">
    <property type="entry name" value="KINESIN-LIKE PROTEIN KLP-3"/>
    <property type="match status" value="1"/>
</dbReference>
<dbReference type="Pfam" id="PF00225">
    <property type="entry name" value="Kinesin"/>
    <property type="match status" value="1"/>
</dbReference>
<dbReference type="PRINTS" id="PR00380">
    <property type="entry name" value="KINESINHEAVY"/>
</dbReference>
<dbReference type="SMART" id="SM00129">
    <property type="entry name" value="KISc"/>
    <property type="match status" value="1"/>
</dbReference>
<dbReference type="SUPFAM" id="SSF52540">
    <property type="entry name" value="P-loop containing nucleoside triphosphate hydrolases"/>
    <property type="match status" value="1"/>
</dbReference>
<dbReference type="PROSITE" id="PS50067">
    <property type="entry name" value="KINESIN_MOTOR_2"/>
    <property type="match status" value="1"/>
</dbReference>
<reference key="1">
    <citation type="journal article" date="2005" name="Nature">
        <title>The map-based sequence of the rice genome.</title>
        <authorList>
            <consortium name="International rice genome sequencing project (IRGSP)"/>
        </authorList>
    </citation>
    <scope>NUCLEOTIDE SEQUENCE [LARGE SCALE GENOMIC DNA]</scope>
    <source>
        <strain>cv. Nipponbare</strain>
    </source>
</reference>
<reference key="2">
    <citation type="journal article" date="2008" name="Nucleic Acids Res.">
        <title>The rice annotation project database (RAP-DB): 2008 update.</title>
        <authorList>
            <consortium name="The rice annotation project (RAP)"/>
        </authorList>
    </citation>
    <scope>GENOME REANNOTATION</scope>
    <source>
        <strain>cv. Nipponbare</strain>
    </source>
</reference>
<reference key="3">
    <citation type="journal article" date="2013" name="Rice">
        <title>Improvement of the Oryza sativa Nipponbare reference genome using next generation sequence and optical map data.</title>
        <authorList>
            <person name="Kawahara Y."/>
            <person name="de la Bastide M."/>
            <person name="Hamilton J.P."/>
            <person name="Kanamori H."/>
            <person name="McCombie W.R."/>
            <person name="Ouyang S."/>
            <person name="Schwartz D.C."/>
            <person name="Tanaka T."/>
            <person name="Wu J."/>
            <person name="Zhou S."/>
            <person name="Childs K.L."/>
            <person name="Davidson R.M."/>
            <person name="Lin H."/>
            <person name="Quesada-Ocampo L."/>
            <person name="Vaillancourt B."/>
            <person name="Sakai H."/>
            <person name="Lee S.S."/>
            <person name="Kim J."/>
            <person name="Numa H."/>
            <person name="Itoh T."/>
            <person name="Buell C.R."/>
            <person name="Matsumoto T."/>
        </authorList>
    </citation>
    <scope>GENOME REANNOTATION</scope>
    <source>
        <strain>cv. Nipponbare</strain>
    </source>
</reference>
<reference key="4">
    <citation type="journal article" date="2005" name="PLoS Biol.">
        <title>The genomes of Oryza sativa: a history of duplications.</title>
        <authorList>
            <person name="Yu J."/>
            <person name="Wang J."/>
            <person name="Lin W."/>
            <person name="Li S."/>
            <person name="Li H."/>
            <person name="Zhou J."/>
            <person name="Ni P."/>
            <person name="Dong W."/>
            <person name="Hu S."/>
            <person name="Zeng C."/>
            <person name="Zhang J."/>
            <person name="Zhang Y."/>
            <person name="Li R."/>
            <person name="Xu Z."/>
            <person name="Li S."/>
            <person name="Li X."/>
            <person name="Zheng H."/>
            <person name="Cong L."/>
            <person name="Lin L."/>
            <person name="Yin J."/>
            <person name="Geng J."/>
            <person name="Li G."/>
            <person name="Shi J."/>
            <person name="Liu J."/>
            <person name="Lv H."/>
            <person name="Li J."/>
            <person name="Wang J."/>
            <person name="Deng Y."/>
            <person name="Ran L."/>
            <person name="Shi X."/>
            <person name="Wang X."/>
            <person name="Wu Q."/>
            <person name="Li C."/>
            <person name="Ren X."/>
            <person name="Wang J."/>
            <person name="Wang X."/>
            <person name="Li D."/>
            <person name="Liu D."/>
            <person name="Zhang X."/>
            <person name="Ji Z."/>
            <person name="Zhao W."/>
            <person name="Sun Y."/>
            <person name="Zhang Z."/>
            <person name="Bao J."/>
            <person name="Han Y."/>
            <person name="Dong L."/>
            <person name="Ji J."/>
            <person name="Chen P."/>
            <person name="Wu S."/>
            <person name="Liu J."/>
            <person name="Xiao Y."/>
            <person name="Bu D."/>
            <person name="Tan J."/>
            <person name="Yang L."/>
            <person name="Ye C."/>
            <person name="Zhang J."/>
            <person name="Xu J."/>
            <person name="Zhou Y."/>
            <person name="Yu Y."/>
            <person name="Zhang B."/>
            <person name="Zhuang S."/>
            <person name="Wei H."/>
            <person name="Liu B."/>
            <person name="Lei M."/>
            <person name="Yu H."/>
            <person name="Li Y."/>
            <person name="Xu H."/>
            <person name="Wei S."/>
            <person name="He X."/>
            <person name="Fang L."/>
            <person name="Zhang Z."/>
            <person name="Zhang Y."/>
            <person name="Huang X."/>
            <person name="Su Z."/>
            <person name="Tong W."/>
            <person name="Li J."/>
            <person name="Tong Z."/>
            <person name="Li S."/>
            <person name="Ye J."/>
            <person name="Wang L."/>
            <person name="Fang L."/>
            <person name="Lei T."/>
            <person name="Chen C.-S."/>
            <person name="Chen H.-C."/>
            <person name="Xu Z."/>
            <person name="Li H."/>
            <person name="Huang H."/>
            <person name="Zhang F."/>
            <person name="Xu H."/>
            <person name="Li N."/>
            <person name="Zhao C."/>
            <person name="Li S."/>
            <person name="Dong L."/>
            <person name="Huang Y."/>
            <person name="Li L."/>
            <person name="Xi Y."/>
            <person name="Qi Q."/>
            <person name="Li W."/>
            <person name="Zhang B."/>
            <person name="Hu W."/>
            <person name="Zhang Y."/>
            <person name="Tian X."/>
            <person name="Jiao Y."/>
            <person name="Liang X."/>
            <person name="Jin J."/>
            <person name="Gao L."/>
            <person name="Zheng W."/>
            <person name="Hao B."/>
            <person name="Liu S.-M."/>
            <person name="Wang W."/>
            <person name="Yuan L."/>
            <person name="Cao M."/>
            <person name="McDermott J."/>
            <person name="Samudrala R."/>
            <person name="Wang J."/>
            <person name="Wong G.K.-S."/>
            <person name="Yang H."/>
        </authorList>
    </citation>
    <scope>NUCLEOTIDE SEQUENCE [LARGE SCALE GENOMIC DNA]</scope>
    <source>
        <strain>cv. Nipponbare</strain>
    </source>
</reference>
<reference key="5">
    <citation type="journal article" date="2009" name="Ann. Bot.">
        <title>Evaluating the microtubule cytoskeleton and its interacting proteins in monocots by mining the rice genome.</title>
        <authorList>
            <person name="Guo L."/>
            <person name="Ho C.M."/>
            <person name="Kong Z."/>
            <person name="Lee Y.R."/>
            <person name="Qian Q."/>
            <person name="Liu B."/>
        </authorList>
    </citation>
    <scope>GENE FAMILY</scope>
    <scope>NOMENCLATURE</scope>
</reference>
<proteinExistence type="inferred from homology"/>
<protein>
    <recommendedName>
        <fullName evidence="4">Kinesin-like protein KIN-14B</fullName>
    </recommendedName>
</protein>
<name>KN14B_ORYSJ</name>
<sequence length="830" mass="93737">MDVQPARTMRNLPDTLSSLMGFNKHLTPSWIESVSHIIDGLSPTKPQMKVMVEKDENISDDNTESEAKVQKIQDELVSLNAQLKQITLQRREALNNYLDLKGNIRVFCRIRPFHHEESYSSRNLFTLDESNVFLKVAETKRKQYKFDKVFDQFSTQGDVFSEVEPVIKSALDGYNVCIFAYGQTGSGKTYTMEGKPTNLGVIPRGIQTLFNQASECNNRFLFTFSMLEIYMGNIRDLLAPRSKTNGIKNVPSLSIKSDPDGGIEIEDLVAVTVNSFQEVKRLYEMGTRLRSTASTMANSTSSRSHCLIRISLTSLNATERRKATSKLWMIDLGGSERLVKTKATGKRLKEGKAINLSLSALGDVIDALQTKKPHVPYRNSKLTQVLRDSLGCESKTLMLVHISPDEGDLCETICTLGFATRVRSIRLESEEPPEMKARKETLLIDLGQKVNDLEHECEDIRRKIKNLEESMEHLTGPQPTIYSNFDMSHLSSEELKTDVSSNVRNSKNRREASSRLPRFMKPTASSQHRIGLNNRTPIINRLKPPVPPRRRPSSVYAESVMVPVNAAPWQSECSSECSMSLTSDMNWTPSIRDGTECSQDASEYEIKQVIFSEHEKSSHDQVTCYTDYPLAESRDIQIKIEEKGIVDIDNWLHQQIVEKTSTFRSKMVLDIPGVTEAEIHVSSIPSPTTMACTKEDSQVKDEVMGLTLQSSTDYVEDIKQSKTDNQFTAKELCTPPFKEFSSNNEVKGHKNEHPVYHGRPRRSLQEELENCTLEKPNMDSKSHRSHDDKHKTGKFTKFFQALQTAWIGALLALGTVSIGLEHGFFQSLTL</sequence>
<keyword id="KW-0067">ATP-binding</keyword>
<keyword id="KW-0175">Coiled coil</keyword>
<keyword id="KW-0493">Microtubule</keyword>
<keyword id="KW-0505">Motor protein</keyword>
<keyword id="KW-0547">Nucleotide-binding</keyword>
<keyword id="KW-1185">Reference proteome</keyword>
<comment type="similarity">
    <text evidence="3">Belongs to the TRAFAC class myosin-kinesin ATPase superfamily. Kinesin family. KIN-14 subfamily.</text>
</comment>
<comment type="sequence caution" evidence="4">
    <conflict type="erroneous gene model prediction">
        <sequence resource="EMBL-CDS" id="BAH90995"/>
    </conflict>
</comment>
<comment type="sequence caution" evidence="4">
    <conflict type="erroneous gene model prediction">
        <sequence resource="EMBL-CDS" id="BAS71416"/>
    </conflict>
</comment>
<comment type="sequence caution" evidence="4">
    <conflict type="erroneous gene model prediction">
        <sequence resource="EMBL-CDS" id="EAZ11311"/>
    </conflict>
</comment>
<organism>
    <name type="scientific">Oryza sativa subsp. japonica</name>
    <name type="common">Rice</name>
    <dbReference type="NCBI Taxonomy" id="39947"/>
    <lineage>
        <taxon>Eukaryota</taxon>
        <taxon>Viridiplantae</taxon>
        <taxon>Streptophyta</taxon>
        <taxon>Embryophyta</taxon>
        <taxon>Tracheophyta</taxon>
        <taxon>Spermatophyta</taxon>
        <taxon>Magnoliopsida</taxon>
        <taxon>Liliopsida</taxon>
        <taxon>Poales</taxon>
        <taxon>Poaceae</taxon>
        <taxon>BOP clade</taxon>
        <taxon>Oryzoideae</taxon>
        <taxon>Oryzeae</taxon>
        <taxon>Oryzinae</taxon>
        <taxon>Oryza</taxon>
        <taxon>Oryza sativa</taxon>
    </lineage>
</organism>
<accession>A2ZRG4</accession>
<accession>C7IW65</accession>
<evidence type="ECO:0000255" key="1"/>
<evidence type="ECO:0000255" key="2">
    <source>
        <dbReference type="PROSITE-ProRule" id="PRU00283"/>
    </source>
</evidence>
<evidence type="ECO:0000303" key="3">
    <source>
    </source>
</evidence>
<evidence type="ECO:0000305" key="4"/>
<evidence type="ECO:0000312" key="5">
    <source>
        <dbReference type="EMBL" id="BAS71416.1"/>
    </source>
</evidence>
<evidence type="ECO:0000312" key="6">
    <source>
        <dbReference type="EMBL" id="EAZ11311.1"/>
    </source>
</evidence>
<gene>
    <name evidence="4" type="primary">KIN14B</name>
    <name evidence="5" type="ordered locus">Os01g0260100</name>
    <name evidence="4" type="ordered locus">LOC_Os01g15540</name>
    <name evidence="6" type="ORF">OsJ_01175</name>
</gene>
<feature type="chain" id="PRO_0000438628" description="Kinesin-like protein KIN-14B">
    <location>
        <begin position="1"/>
        <end position="830"/>
    </location>
</feature>
<feature type="domain" description="Kinesin motor" evidence="2">
    <location>
        <begin position="103"/>
        <end position="425"/>
    </location>
</feature>
<feature type="coiled-coil region" evidence="1">
    <location>
        <begin position="56"/>
        <end position="97"/>
    </location>
</feature>
<feature type="coiled-coil region" evidence="1">
    <location>
        <begin position="434"/>
        <end position="476"/>
    </location>
</feature>
<feature type="binding site" evidence="2">
    <location>
        <begin position="182"/>
        <end position="189"/>
    </location>
    <ligand>
        <name>ATP</name>
        <dbReference type="ChEBI" id="CHEBI:30616"/>
    </ligand>
</feature>